<dbReference type="EMBL" id="X80835">
    <property type="status" value="NOT_ANNOTATED_CDS"/>
    <property type="molecule type" value="Genomic_DNA"/>
</dbReference>
<dbReference type="EMBL" id="AF479905">
    <property type="protein sequence ID" value="AAL79218.1"/>
    <property type="molecule type" value="Genomic_DNA"/>
</dbReference>
<dbReference type="EMBL" id="BK006946">
    <property type="protein sequence ID" value="DAA09798.1"/>
    <property type="molecule type" value="Genomic_DNA"/>
</dbReference>
<dbReference type="RefSeq" id="NP_878138.1">
    <property type="nucleotide sequence ID" value="NM_001184612.1"/>
</dbReference>
<dbReference type="BioGRID" id="37038">
    <property type="interactions" value="69"/>
</dbReference>
<dbReference type="FunCoup" id="Q8TGT0">
    <property type="interactions" value="30"/>
</dbReference>
<dbReference type="STRING" id="4932.YML100W-A"/>
<dbReference type="PaxDb" id="4932-YML100W-A"/>
<dbReference type="EnsemblFungi" id="YML100W-A_mRNA">
    <property type="protein sequence ID" value="YML100W-A"/>
    <property type="gene ID" value="YML100W-A"/>
</dbReference>
<dbReference type="GeneID" id="1466496"/>
<dbReference type="KEGG" id="sce:YML100W-A"/>
<dbReference type="AGR" id="SGD:S000028688"/>
<dbReference type="SGD" id="S000028688">
    <property type="gene designation" value="YML100W-A"/>
</dbReference>
<dbReference type="VEuPathDB" id="FungiDB:YML100W-A"/>
<dbReference type="HOGENOM" id="CLU_2759745_0_0_1"/>
<dbReference type="InParanoid" id="Q8TGT0"/>
<dbReference type="OrthoDB" id="10294346at2759"/>
<dbReference type="BioCyc" id="YEAST:G3O-33029-MONOMER"/>
<dbReference type="BioGRID-ORCS" id="1466496">
    <property type="hits" value="0 hits in 10 CRISPR screens"/>
</dbReference>
<dbReference type="PRO" id="PR:Q8TGT0"/>
<dbReference type="Proteomes" id="UP000002311">
    <property type="component" value="Chromosome XIII"/>
</dbReference>
<dbReference type="RNAct" id="Q8TGT0">
    <property type="molecule type" value="protein"/>
</dbReference>
<evidence type="ECO:0000256" key="1">
    <source>
        <dbReference type="SAM" id="MobiDB-lite"/>
    </source>
</evidence>
<feature type="chain" id="PRO_0000247781" description="Uncharacterized protein YML100W-A">
    <location>
        <begin position="1"/>
        <end position="57"/>
    </location>
</feature>
<feature type="region of interest" description="Disordered" evidence="1">
    <location>
        <begin position="34"/>
        <end position="57"/>
    </location>
</feature>
<gene>
    <name type="ordered locus">YML100W-A</name>
</gene>
<sequence>MYKCVPSYYSKAGTIVVTYCEISALLVSLKNRVQGKRGETEGQIEISRKAGHPAPAF</sequence>
<organism>
    <name type="scientific">Saccharomyces cerevisiae (strain ATCC 204508 / S288c)</name>
    <name type="common">Baker's yeast</name>
    <dbReference type="NCBI Taxonomy" id="559292"/>
    <lineage>
        <taxon>Eukaryota</taxon>
        <taxon>Fungi</taxon>
        <taxon>Dikarya</taxon>
        <taxon>Ascomycota</taxon>
        <taxon>Saccharomycotina</taxon>
        <taxon>Saccharomycetes</taxon>
        <taxon>Saccharomycetales</taxon>
        <taxon>Saccharomycetaceae</taxon>
        <taxon>Saccharomyces</taxon>
    </lineage>
</organism>
<proteinExistence type="predicted"/>
<keyword id="KW-1185">Reference proteome</keyword>
<accession>Q8TGT0</accession>
<accession>D6W0I4</accession>
<reference key="1">
    <citation type="journal article" date="1997" name="Nature">
        <title>The nucleotide sequence of Saccharomyces cerevisiae chromosome XIII.</title>
        <authorList>
            <person name="Bowman S."/>
            <person name="Churcher C.M."/>
            <person name="Badcock K."/>
            <person name="Brown D."/>
            <person name="Chillingworth T."/>
            <person name="Connor R."/>
            <person name="Dedman K."/>
            <person name="Devlin K."/>
            <person name="Gentles S."/>
            <person name="Hamlin N."/>
            <person name="Hunt S."/>
            <person name="Jagels K."/>
            <person name="Lye G."/>
            <person name="Moule S."/>
            <person name="Odell C."/>
            <person name="Pearson D."/>
            <person name="Rajandream M.A."/>
            <person name="Rice P."/>
            <person name="Skelton J."/>
            <person name="Walsh S.V."/>
            <person name="Whitehead S."/>
            <person name="Barrell B.G."/>
        </authorList>
    </citation>
    <scope>NUCLEOTIDE SEQUENCE [LARGE SCALE GENOMIC DNA]</scope>
    <source>
        <strain>ATCC 204508 / S288c</strain>
    </source>
</reference>
<reference key="2">
    <citation type="journal article" date="2014" name="G3 (Bethesda)">
        <title>The reference genome sequence of Saccharomyces cerevisiae: Then and now.</title>
        <authorList>
            <person name="Engel S.R."/>
            <person name="Dietrich F.S."/>
            <person name="Fisk D.G."/>
            <person name="Binkley G."/>
            <person name="Balakrishnan R."/>
            <person name="Costanzo M.C."/>
            <person name="Dwight S.S."/>
            <person name="Hitz B.C."/>
            <person name="Karra K."/>
            <person name="Nash R.S."/>
            <person name="Weng S."/>
            <person name="Wong E.D."/>
            <person name="Lloyd P."/>
            <person name="Skrzypek M.S."/>
            <person name="Miyasato S.R."/>
            <person name="Simison M."/>
            <person name="Cherry J.M."/>
        </authorList>
    </citation>
    <scope>GENOME REANNOTATION</scope>
    <source>
        <strain>ATCC 204508 / S288c</strain>
    </source>
</reference>
<reference key="3">
    <citation type="journal article" date="2002" name="Nat. Biotechnol.">
        <title>An integrated approach for finding overlooked genes in yeast.</title>
        <authorList>
            <person name="Kumar A."/>
            <person name="Harrison P.M."/>
            <person name="Cheung K.-H."/>
            <person name="Lan N."/>
            <person name="Echols N."/>
            <person name="Bertone P."/>
            <person name="Miller P."/>
            <person name="Gerstein M.B."/>
            <person name="Snyder M."/>
        </authorList>
    </citation>
    <scope>NUCLEOTIDE SEQUENCE [GENOMIC DNA]</scope>
</reference>
<name>YM100_YEAST</name>
<protein>
    <recommendedName>
        <fullName>Uncharacterized protein YML100W-A</fullName>
    </recommendedName>
</protein>